<comment type="function">
    <text evidence="1">Converts 2-oxo acids to branched-chain amino acids. Acts on leucine, isoleucine and valine (By similarity).</text>
</comment>
<comment type="catalytic activity">
    <reaction>
        <text>L-leucine + 2-oxoglutarate = 4-methyl-2-oxopentanoate + L-glutamate</text>
        <dbReference type="Rhea" id="RHEA:18321"/>
        <dbReference type="ChEBI" id="CHEBI:16810"/>
        <dbReference type="ChEBI" id="CHEBI:17865"/>
        <dbReference type="ChEBI" id="CHEBI:29985"/>
        <dbReference type="ChEBI" id="CHEBI:57427"/>
        <dbReference type="EC" id="2.6.1.42"/>
    </reaction>
</comment>
<comment type="catalytic activity">
    <reaction>
        <text>L-isoleucine + 2-oxoglutarate = (S)-3-methyl-2-oxopentanoate + L-glutamate</text>
        <dbReference type="Rhea" id="RHEA:24801"/>
        <dbReference type="ChEBI" id="CHEBI:16810"/>
        <dbReference type="ChEBI" id="CHEBI:29985"/>
        <dbReference type="ChEBI" id="CHEBI:35146"/>
        <dbReference type="ChEBI" id="CHEBI:58045"/>
        <dbReference type="EC" id="2.6.1.42"/>
    </reaction>
</comment>
<comment type="catalytic activity">
    <reaction>
        <text>L-valine + 2-oxoglutarate = 3-methyl-2-oxobutanoate + L-glutamate</text>
        <dbReference type="Rhea" id="RHEA:24813"/>
        <dbReference type="ChEBI" id="CHEBI:11851"/>
        <dbReference type="ChEBI" id="CHEBI:16810"/>
        <dbReference type="ChEBI" id="CHEBI:29985"/>
        <dbReference type="ChEBI" id="CHEBI:57762"/>
        <dbReference type="EC" id="2.6.1.42"/>
    </reaction>
</comment>
<comment type="cofactor">
    <cofactor>
        <name>pyridoxal 5'-phosphate</name>
        <dbReference type="ChEBI" id="CHEBI:597326"/>
    </cofactor>
</comment>
<comment type="pathway">
    <text>Amino-acid degradation; L-leucine degradation; 4-methyl-2-oxopentanoate from L-leucine (aminotransferase route): step 1/1.</text>
</comment>
<comment type="pathway">
    <text>Amino-acid degradation; L-valine degradation.</text>
</comment>
<comment type="subcellular location">
    <subcellularLocation>
        <location>Mitochondrion</location>
    </subcellularLocation>
</comment>
<comment type="alternative products">
    <event type="alternative splicing"/>
    <isoform>
        <id>Q93Y32-1</id>
        <name>1</name>
        <sequence type="displayed"/>
    </isoform>
    <text>A number of isoforms are produced. According to EST sequences.</text>
</comment>
<comment type="miscellaneous">
    <text>Branched-chain amino acids are synthesized in chloroplasts, whereas the degradation takes place in mitochondria.</text>
</comment>
<comment type="similarity">
    <text evidence="3">Belongs to the class-IV pyridoxal-phosphate-dependent aminotransferase family.</text>
</comment>
<comment type="sequence caution" evidence="3">
    <conflict type="erroneous gene model prediction">
        <sequence resource="EMBL-CDS" id="AAC34335"/>
    </conflict>
</comment>
<reference key="1">
    <citation type="journal article" date="2002" name="Plant Physiol.">
        <title>The branched-chain amino acid transaminase gene family in Arabidopsis encodes plastid and mitochondrial proteins.</title>
        <authorList>
            <person name="Diebold R."/>
            <person name="Schuster J."/>
            <person name="Daschner K."/>
            <person name="Binder S."/>
        </authorList>
    </citation>
    <scope>NUCLEOTIDE SEQUENCE [MRNA]</scope>
    <scope>CHARACTERIZATION</scope>
    <source>
        <strain>cv. Columbia</strain>
    </source>
</reference>
<reference key="2">
    <citation type="journal article" date="2000" name="Nature">
        <title>Sequence and analysis of chromosome 1 of the plant Arabidopsis thaliana.</title>
        <authorList>
            <person name="Theologis A."/>
            <person name="Ecker J.R."/>
            <person name="Palm C.J."/>
            <person name="Federspiel N.A."/>
            <person name="Kaul S."/>
            <person name="White O."/>
            <person name="Alonso J."/>
            <person name="Altafi H."/>
            <person name="Araujo R."/>
            <person name="Bowman C.L."/>
            <person name="Brooks S.Y."/>
            <person name="Buehler E."/>
            <person name="Chan A."/>
            <person name="Chao Q."/>
            <person name="Chen H."/>
            <person name="Cheuk R.F."/>
            <person name="Chin C.W."/>
            <person name="Chung M.K."/>
            <person name="Conn L."/>
            <person name="Conway A.B."/>
            <person name="Conway A.R."/>
            <person name="Creasy T.H."/>
            <person name="Dewar K."/>
            <person name="Dunn P."/>
            <person name="Etgu P."/>
            <person name="Feldblyum T.V."/>
            <person name="Feng J.-D."/>
            <person name="Fong B."/>
            <person name="Fujii C.Y."/>
            <person name="Gill J.E."/>
            <person name="Goldsmith A.D."/>
            <person name="Haas B."/>
            <person name="Hansen N.F."/>
            <person name="Hughes B."/>
            <person name="Huizar L."/>
            <person name="Hunter J.L."/>
            <person name="Jenkins J."/>
            <person name="Johnson-Hopson C."/>
            <person name="Khan S."/>
            <person name="Khaykin E."/>
            <person name="Kim C.J."/>
            <person name="Koo H.L."/>
            <person name="Kremenetskaia I."/>
            <person name="Kurtz D.B."/>
            <person name="Kwan A."/>
            <person name="Lam B."/>
            <person name="Langin-Hooper S."/>
            <person name="Lee A."/>
            <person name="Lee J.M."/>
            <person name="Lenz C.A."/>
            <person name="Li J.H."/>
            <person name="Li Y.-P."/>
            <person name="Lin X."/>
            <person name="Liu S.X."/>
            <person name="Liu Z.A."/>
            <person name="Luros J.S."/>
            <person name="Maiti R."/>
            <person name="Marziali A."/>
            <person name="Militscher J."/>
            <person name="Miranda M."/>
            <person name="Nguyen M."/>
            <person name="Nierman W.C."/>
            <person name="Osborne B.I."/>
            <person name="Pai G."/>
            <person name="Peterson J."/>
            <person name="Pham P.K."/>
            <person name="Rizzo M."/>
            <person name="Rooney T."/>
            <person name="Rowley D."/>
            <person name="Sakano H."/>
            <person name="Salzberg S.L."/>
            <person name="Schwartz J.R."/>
            <person name="Shinn P."/>
            <person name="Southwick A.M."/>
            <person name="Sun H."/>
            <person name="Tallon L.J."/>
            <person name="Tambunga G."/>
            <person name="Toriumi M.J."/>
            <person name="Town C.D."/>
            <person name="Utterback T."/>
            <person name="Van Aken S."/>
            <person name="Vaysberg M."/>
            <person name="Vysotskaia V.S."/>
            <person name="Walker M."/>
            <person name="Wu D."/>
            <person name="Yu G."/>
            <person name="Fraser C.M."/>
            <person name="Venter J.C."/>
            <person name="Davis R.W."/>
        </authorList>
    </citation>
    <scope>NUCLEOTIDE SEQUENCE [LARGE SCALE GENOMIC DNA]</scope>
    <source>
        <strain>cv. Columbia</strain>
    </source>
</reference>
<reference key="3">
    <citation type="journal article" date="2017" name="Plant J.">
        <title>Araport11: a complete reannotation of the Arabidopsis thaliana reference genome.</title>
        <authorList>
            <person name="Cheng C.Y."/>
            <person name="Krishnakumar V."/>
            <person name="Chan A.P."/>
            <person name="Thibaud-Nissen F."/>
            <person name="Schobel S."/>
            <person name="Town C.D."/>
        </authorList>
    </citation>
    <scope>GENOME REANNOTATION</scope>
    <source>
        <strain>cv. Columbia</strain>
    </source>
</reference>
<reference key="4">
    <citation type="journal article" date="2003" name="Science">
        <title>Empirical analysis of transcriptional activity in the Arabidopsis genome.</title>
        <authorList>
            <person name="Yamada K."/>
            <person name="Lim J."/>
            <person name="Dale J.M."/>
            <person name="Chen H."/>
            <person name="Shinn P."/>
            <person name="Palm C.J."/>
            <person name="Southwick A.M."/>
            <person name="Wu H.C."/>
            <person name="Kim C.J."/>
            <person name="Nguyen M."/>
            <person name="Pham P.K."/>
            <person name="Cheuk R.F."/>
            <person name="Karlin-Newmann G."/>
            <person name="Liu S.X."/>
            <person name="Lam B."/>
            <person name="Sakano H."/>
            <person name="Wu T."/>
            <person name="Yu G."/>
            <person name="Miranda M."/>
            <person name="Quach H.L."/>
            <person name="Tripp M."/>
            <person name="Chang C.H."/>
            <person name="Lee J.M."/>
            <person name="Toriumi M.J."/>
            <person name="Chan M.M."/>
            <person name="Tang C.C."/>
            <person name="Onodera C.S."/>
            <person name="Deng J.M."/>
            <person name="Akiyama K."/>
            <person name="Ansari Y."/>
            <person name="Arakawa T."/>
            <person name="Banh J."/>
            <person name="Banno F."/>
            <person name="Bowser L."/>
            <person name="Brooks S.Y."/>
            <person name="Carninci P."/>
            <person name="Chao Q."/>
            <person name="Choy N."/>
            <person name="Enju A."/>
            <person name="Goldsmith A.D."/>
            <person name="Gurjal M."/>
            <person name="Hansen N.F."/>
            <person name="Hayashizaki Y."/>
            <person name="Johnson-Hopson C."/>
            <person name="Hsuan V.W."/>
            <person name="Iida K."/>
            <person name="Karnes M."/>
            <person name="Khan S."/>
            <person name="Koesema E."/>
            <person name="Ishida J."/>
            <person name="Jiang P.X."/>
            <person name="Jones T."/>
            <person name="Kawai J."/>
            <person name="Kamiya A."/>
            <person name="Meyers C."/>
            <person name="Nakajima M."/>
            <person name="Narusaka M."/>
            <person name="Seki M."/>
            <person name="Sakurai T."/>
            <person name="Satou M."/>
            <person name="Tamse R."/>
            <person name="Vaysberg M."/>
            <person name="Wallender E.K."/>
            <person name="Wong C."/>
            <person name="Yamamura Y."/>
            <person name="Yuan S."/>
            <person name="Shinozaki K."/>
            <person name="Davis R.W."/>
            <person name="Theologis A."/>
            <person name="Ecker J.R."/>
        </authorList>
    </citation>
    <scope>NUCLEOTIDE SEQUENCE [LARGE SCALE MRNA]</scope>
    <source>
        <strain>cv. Columbia</strain>
    </source>
</reference>
<sequence length="384" mass="41934">MALRRCLPQYSTTSSYLSKIWGFRMHGTKAAASVVEEHVSGAEREDEEYADVDWDNLGFSLVRTDFMFATKSCRDGNFEQGYLSRYGNIELNPAAGILNYGQGLIEGMKAYRGEDGRVLLFRPELNAMRMKIGAERMCMHSPSVHQFIEGVKQTVLANRRWVPPPGKGSLYLRPLLFGSGASLGVAAASEYTFLVFGSPVQNYFKEGTAALNLYVEEVIPRAYLGGTGGVKAISNYGPVLEVMRRAKSRGFSDVLYLDADTGKNIEEVSAANIFLVKGNTIVTPATSGTILGGITRKSIIEIALDLGYKVEERSVPVEELKEAEEVFCTGTAAGVASVGSITFKNTRTEYKVGDGIVTQQLRSILVGIQTGSIQDTKDWVLQIA</sequence>
<keyword id="KW-0025">Alternative splicing</keyword>
<keyword id="KW-0032">Aminotransferase</keyword>
<keyword id="KW-0101">Branched-chain amino acid catabolism</keyword>
<keyword id="KW-0496">Mitochondrion</keyword>
<keyword id="KW-0663">Pyridoxal phosphate</keyword>
<keyword id="KW-1185">Reference proteome</keyword>
<keyword id="KW-0808">Transferase</keyword>
<keyword id="KW-0809">Transit peptide</keyword>
<proteinExistence type="evidence at protein level"/>
<gene>
    <name type="primary">BCAT1</name>
    <name type="ordered locus">At1g10060</name>
    <name type="ORF">T27I1.8</name>
</gene>
<evidence type="ECO:0000250" key="1"/>
<evidence type="ECO:0000255" key="2"/>
<evidence type="ECO:0000305" key="3"/>
<name>BCAT1_ARATH</name>
<accession>Q93Y32</accession>
<accession>O80597</accession>
<organism>
    <name type="scientific">Arabidopsis thaliana</name>
    <name type="common">Mouse-ear cress</name>
    <dbReference type="NCBI Taxonomy" id="3702"/>
    <lineage>
        <taxon>Eukaryota</taxon>
        <taxon>Viridiplantae</taxon>
        <taxon>Streptophyta</taxon>
        <taxon>Embryophyta</taxon>
        <taxon>Tracheophyta</taxon>
        <taxon>Spermatophyta</taxon>
        <taxon>Magnoliopsida</taxon>
        <taxon>eudicotyledons</taxon>
        <taxon>Gunneridae</taxon>
        <taxon>Pentapetalae</taxon>
        <taxon>rosids</taxon>
        <taxon>malvids</taxon>
        <taxon>Brassicales</taxon>
        <taxon>Brassicaceae</taxon>
        <taxon>Camelineae</taxon>
        <taxon>Arabidopsis</taxon>
    </lineage>
</organism>
<feature type="transit peptide" description="Mitochondrion" evidence="2">
    <location>
        <begin position="1"/>
        <end position="18"/>
    </location>
</feature>
<feature type="chain" id="PRO_0000001275" description="Branched-chain-amino-acid aminotransferase 1, mitochondrial">
    <location>
        <begin position="19"/>
        <end position="384"/>
    </location>
</feature>
<feature type="modified residue" description="N6-(pyridoxal phosphate)lysine" evidence="1">
    <location>
        <position position="231"/>
    </location>
</feature>
<dbReference type="EC" id="2.6.1.42"/>
<dbReference type="EMBL" id="AJ276123">
    <property type="protein sequence ID" value="CAB93130.1"/>
    <property type="molecule type" value="mRNA"/>
</dbReference>
<dbReference type="EMBL" id="AC004122">
    <property type="protein sequence ID" value="AAC34335.1"/>
    <property type="status" value="ALT_SEQ"/>
    <property type="molecule type" value="Genomic_DNA"/>
</dbReference>
<dbReference type="EMBL" id="CP002684">
    <property type="protein sequence ID" value="AEE28535.1"/>
    <property type="molecule type" value="Genomic_DNA"/>
</dbReference>
<dbReference type="EMBL" id="AY054517">
    <property type="protein sequence ID" value="AAK96708.1"/>
    <property type="molecule type" value="mRNA"/>
</dbReference>
<dbReference type="EMBL" id="AY128778">
    <property type="protein sequence ID" value="AAM91178.1"/>
    <property type="molecule type" value="mRNA"/>
</dbReference>
<dbReference type="PIR" id="T00625">
    <property type="entry name" value="T00625"/>
</dbReference>
<dbReference type="RefSeq" id="NP_563859.1">
    <property type="nucleotide sequence ID" value="NM_100880.3"/>
</dbReference>
<dbReference type="RefSeq" id="NP_849629.1">
    <molecule id="Q93Y32-1"/>
    <property type="nucleotide sequence ID" value="NM_179298.2"/>
</dbReference>
<dbReference type="SMR" id="Q93Y32"/>
<dbReference type="BioGRID" id="22782">
    <property type="interactions" value="1"/>
</dbReference>
<dbReference type="FunCoup" id="Q93Y32">
    <property type="interactions" value="1735"/>
</dbReference>
<dbReference type="STRING" id="3702.Q93Y32"/>
<dbReference type="iPTMnet" id="Q93Y32"/>
<dbReference type="PaxDb" id="3702-AT1G10060.2"/>
<dbReference type="EnsemblPlants" id="AT1G10060.2">
    <molecule id="Q93Y32-1"/>
    <property type="protein sequence ID" value="AT1G10060.2"/>
    <property type="gene ID" value="AT1G10060"/>
</dbReference>
<dbReference type="GeneID" id="837542"/>
<dbReference type="Gramene" id="AT1G10060.2">
    <molecule id="Q93Y32-1"/>
    <property type="protein sequence ID" value="AT1G10060.2"/>
    <property type="gene ID" value="AT1G10060"/>
</dbReference>
<dbReference type="KEGG" id="ath:AT1G10060"/>
<dbReference type="Araport" id="AT1G10060"/>
<dbReference type="TAIR" id="AT1G10060">
    <property type="gene designation" value="BCAT-1"/>
</dbReference>
<dbReference type="eggNOG" id="KOG0975">
    <property type="taxonomic scope" value="Eukaryota"/>
</dbReference>
<dbReference type="InParanoid" id="Q93Y32"/>
<dbReference type="OMA" id="VRTDYMF"/>
<dbReference type="PhylomeDB" id="Q93Y32"/>
<dbReference type="BRENDA" id="2.6.1.42">
    <property type="organism ID" value="399"/>
</dbReference>
<dbReference type="UniPathway" id="UPA00362"/>
<dbReference type="UniPathway" id="UPA00363">
    <property type="reaction ID" value="UER00857"/>
</dbReference>
<dbReference type="PRO" id="PR:Q93Y32"/>
<dbReference type="Proteomes" id="UP000006548">
    <property type="component" value="Chromosome 1"/>
</dbReference>
<dbReference type="ExpressionAtlas" id="Q93Y32">
    <property type="expression patterns" value="baseline and differential"/>
</dbReference>
<dbReference type="GO" id="GO:0005739">
    <property type="term" value="C:mitochondrion"/>
    <property type="evidence" value="ECO:0000314"/>
    <property type="project" value="TAIR"/>
</dbReference>
<dbReference type="GO" id="GO:0004084">
    <property type="term" value="F:branched-chain-amino-acid transaminase activity"/>
    <property type="evidence" value="ECO:0000314"/>
    <property type="project" value="TAIR"/>
</dbReference>
<dbReference type="GO" id="GO:0052656">
    <property type="term" value="F:L-isoleucine-2-oxoglutarate transaminase activity"/>
    <property type="evidence" value="ECO:0007669"/>
    <property type="project" value="RHEA"/>
</dbReference>
<dbReference type="GO" id="GO:0052654">
    <property type="term" value="F:L-leucine-2-oxoglutarate transaminase activity"/>
    <property type="evidence" value="ECO:0007669"/>
    <property type="project" value="RHEA"/>
</dbReference>
<dbReference type="GO" id="GO:0052655">
    <property type="term" value="F:L-valine-2-oxoglutarate transaminase activity"/>
    <property type="evidence" value="ECO:0007669"/>
    <property type="project" value="RHEA"/>
</dbReference>
<dbReference type="GO" id="GO:0006552">
    <property type="term" value="P:L-leucine catabolic process"/>
    <property type="evidence" value="ECO:0007669"/>
    <property type="project" value="UniProtKB-UniPathway"/>
</dbReference>
<dbReference type="GO" id="GO:0006574">
    <property type="term" value="P:valine catabolic process"/>
    <property type="evidence" value="ECO:0007669"/>
    <property type="project" value="UniProtKB-UniPathway"/>
</dbReference>
<dbReference type="CDD" id="cd01557">
    <property type="entry name" value="BCAT_beta_family"/>
    <property type="match status" value="1"/>
</dbReference>
<dbReference type="FunFam" id="3.20.10.10:FF:000003">
    <property type="entry name" value="Branched-chain-amino-acid aminotransferase"/>
    <property type="match status" value="1"/>
</dbReference>
<dbReference type="FunFam" id="3.30.470.10:FF:000003">
    <property type="entry name" value="Branched-chain-amino-acid aminotransferase"/>
    <property type="match status" value="1"/>
</dbReference>
<dbReference type="Gene3D" id="3.30.470.10">
    <property type="match status" value="1"/>
</dbReference>
<dbReference type="Gene3D" id="3.20.10.10">
    <property type="entry name" value="D-amino Acid Aminotransferase, subunit A, domain 2"/>
    <property type="match status" value="1"/>
</dbReference>
<dbReference type="InterPro" id="IPR001544">
    <property type="entry name" value="Aminotrans_IV"/>
</dbReference>
<dbReference type="InterPro" id="IPR018300">
    <property type="entry name" value="Aminotrans_IV_CS"/>
</dbReference>
<dbReference type="InterPro" id="IPR036038">
    <property type="entry name" value="Aminotransferase-like"/>
</dbReference>
<dbReference type="InterPro" id="IPR005786">
    <property type="entry name" value="B_amino_transII"/>
</dbReference>
<dbReference type="InterPro" id="IPR043132">
    <property type="entry name" value="BCAT-like_C"/>
</dbReference>
<dbReference type="InterPro" id="IPR043131">
    <property type="entry name" value="BCAT-like_N"/>
</dbReference>
<dbReference type="InterPro" id="IPR033939">
    <property type="entry name" value="BCAT_family"/>
</dbReference>
<dbReference type="NCBIfam" id="TIGR01123">
    <property type="entry name" value="ilvE_II"/>
    <property type="match status" value="1"/>
</dbReference>
<dbReference type="NCBIfam" id="NF009897">
    <property type="entry name" value="PRK13357.1"/>
    <property type="match status" value="1"/>
</dbReference>
<dbReference type="PANTHER" id="PTHR42825">
    <property type="entry name" value="AMINO ACID AMINOTRANSFERASE"/>
    <property type="match status" value="1"/>
</dbReference>
<dbReference type="PANTHER" id="PTHR42825:SF35">
    <property type="entry name" value="BRANCHED-CHAIN-AMINO-ACID AMINOTRANSFERASE 1, MITOCHONDRIAL"/>
    <property type="match status" value="1"/>
</dbReference>
<dbReference type="Pfam" id="PF01063">
    <property type="entry name" value="Aminotran_4"/>
    <property type="match status" value="1"/>
</dbReference>
<dbReference type="PIRSF" id="PIRSF006468">
    <property type="entry name" value="BCAT1"/>
    <property type="match status" value="1"/>
</dbReference>
<dbReference type="SUPFAM" id="SSF56752">
    <property type="entry name" value="D-aminoacid aminotransferase-like PLP-dependent enzymes"/>
    <property type="match status" value="1"/>
</dbReference>
<dbReference type="PROSITE" id="PS00770">
    <property type="entry name" value="AA_TRANSFER_CLASS_4"/>
    <property type="match status" value="1"/>
</dbReference>
<protein>
    <recommendedName>
        <fullName>Branched-chain-amino-acid aminotransferase 1, mitochondrial</fullName>
        <shortName>Atbcat-1</shortName>
        <ecNumber>2.6.1.42</ecNumber>
    </recommendedName>
</protein>